<reference key="1">
    <citation type="journal article" date="2008" name="Genome Res.">
        <title>Genome sequence of the beta-rhizobium Cupriavidus taiwanensis and comparative genomics of rhizobia.</title>
        <authorList>
            <person name="Amadou C."/>
            <person name="Pascal G."/>
            <person name="Mangenot S."/>
            <person name="Glew M."/>
            <person name="Bontemps C."/>
            <person name="Capela D."/>
            <person name="Carrere S."/>
            <person name="Cruveiller S."/>
            <person name="Dossat C."/>
            <person name="Lajus A."/>
            <person name="Marchetti M."/>
            <person name="Poinsot V."/>
            <person name="Rouy Z."/>
            <person name="Servin B."/>
            <person name="Saad M."/>
            <person name="Schenowitz C."/>
            <person name="Barbe V."/>
            <person name="Batut J."/>
            <person name="Medigue C."/>
            <person name="Masson-Boivin C."/>
        </authorList>
    </citation>
    <scope>NUCLEOTIDE SEQUENCE [LARGE SCALE GENOMIC DNA]</scope>
    <source>
        <strain>DSM 17343 / BCRC 17206 / CCUG 44338 / CIP 107171 / LMG 19424 / R1</strain>
    </source>
</reference>
<evidence type="ECO:0000255" key="1">
    <source>
        <dbReference type="HAMAP-Rule" id="MF_00057"/>
    </source>
</evidence>
<protein>
    <recommendedName>
        <fullName evidence="1">3-deoxy-manno-octulosonate cytidylyltransferase</fullName>
        <ecNumber evidence="1">2.7.7.38</ecNumber>
    </recommendedName>
    <alternativeName>
        <fullName evidence="1">CMP-2-keto-3-deoxyoctulosonic acid synthase</fullName>
        <shortName evidence="1">CKS</shortName>
        <shortName evidence="1">CMP-KDO synthase</shortName>
    </alternativeName>
</protein>
<dbReference type="EC" id="2.7.7.38" evidence="1"/>
<dbReference type="EMBL" id="CU633749">
    <property type="protein sequence ID" value="CAQ68544.1"/>
    <property type="molecule type" value="Genomic_DNA"/>
</dbReference>
<dbReference type="RefSeq" id="WP_012351885.1">
    <property type="nucleotide sequence ID" value="NC_010528.1"/>
</dbReference>
<dbReference type="SMR" id="B3R0X8"/>
<dbReference type="GeneID" id="29763272"/>
<dbReference type="KEGG" id="cti:RALTA_A0560"/>
<dbReference type="eggNOG" id="COG1212">
    <property type="taxonomic scope" value="Bacteria"/>
</dbReference>
<dbReference type="HOGENOM" id="CLU_065038_1_0_4"/>
<dbReference type="BioCyc" id="CTAI977880:RALTA_RS02740-MONOMER"/>
<dbReference type="UniPathway" id="UPA00030"/>
<dbReference type="UniPathway" id="UPA00358">
    <property type="reaction ID" value="UER00476"/>
</dbReference>
<dbReference type="Proteomes" id="UP000001692">
    <property type="component" value="Chromosome 1"/>
</dbReference>
<dbReference type="GO" id="GO:0005829">
    <property type="term" value="C:cytosol"/>
    <property type="evidence" value="ECO:0007669"/>
    <property type="project" value="TreeGrafter"/>
</dbReference>
<dbReference type="GO" id="GO:0008690">
    <property type="term" value="F:3-deoxy-manno-octulosonate cytidylyltransferase activity"/>
    <property type="evidence" value="ECO:0007669"/>
    <property type="project" value="UniProtKB-UniRule"/>
</dbReference>
<dbReference type="GO" id="GO:0033468">
    <property type="term" value="P:CMP-keto-3-deoxy-D-manno-octulosonic acid biosynthetic process"/>
    <property type="evidence" value="ECO:0007669"/>
    <property type="project" value="UniProtKB-UniRule"/>
</dbReference>
<dbReference type="GO" id="GO:0009103">
    <property type="term" value="P:lipopolysaccharide biosynthetic process"/>
    <property type="evidence" value="ECO:0007669"/>
    <property type="project" value="UniProtKB-UniRule"/>
</dbReference>
<dbReference type="CDD" id="cd02517">
    <property type="entry name" value="CMP-KDO-Synthetase"/>
    <property type="match status" value="1"/>
</dbReference>
<dbReference type="FunFam" id="3.90.550.10:FF:000011">
    <property type="entry name" value="3-deoxy-manno-octulosonate cytidylyltransferase"/>
    <property type="match status" value="1"/>
</dbReference>
<dbReference type="Gene3D" id="3.90.550.10">
    <property type="entry name" value="Spore Coat Polysaccharide Biosynthesis Protein SpsA, Chain A"/>
    <property type="match status" value="1"/>
</dbReference>
<dbReference type="HAMAP" id="MF_00057">
    <property type="entry name" value="KdsB"/>
    <property type="match status" value="1"/>
</dbReference>
<dbReference type="InterPro" id="IPR003329">
    <property type="entry name" value="Cytidylyl_trans"/>
</dbReference>
<dbReference type="InterPro" id="IPR004528">
    <property type="entry name" value="KdsB"/>
</dbReference>
<dbReference type="InterPro" id="IPR029044">
    <property type="entry name" value="Nucleotide-diphossugar_trans"/>
</dbReference>
<dbReference type="NCBIfam" id="TIGR00466">
    <property type="entry name" value="kdsB"/>
    <property type="match status" value="1"/>
</dbReference>
<dbReference type="NCBIfam" id="NF003952">
    <property type="entry name" value="PRK05450.1-5"/>
    <property type="match status" value="1"/>
</dbReference>
<dbReference type="NCBIfam" id="NF009905">
    <property type="entry name" value="PRK13368.1"/>
    <property type="match status" value="1"/>
</dbReference>
<dbReference type="PANTHER" id="PTHR42866">
    <property type="entry name" value="3-DEOXY-MANNO-OCTULOSONATE CYTIDYLYLTRANSFERASE"/>
    <property type="match status" value="1"/>
</dbReference>
<dbReference type="PANTHER" id="PTHR42866:SF2">
    <property type="entry name" value="3-DEOXY-MANNO-OCTULOSONATE CYTIDYLYLTRANSFERASE, MITOCHONDRIAL"/>
    <property type="match status" value="1"/>
</dbReference>
<dbReference type="Pfam" id="PF02348">
    <property type="entry name" value="CTP_transf_3"/>
    <property type="match status" value="1"/>
</dbReference>
<dbReference type="SUPFAM" id="SSF53448">
    <property type="entry name" value="Nucleotide-diphospho-sugar transferases"/>
    <property type="match status" value="1"/>
</dbReference>
<sequence length="269" mass="28463">MTVPAFTVVIPARLASTRLPDKPLADIGGRPMVVRVAERAHASSAQRTVVATDAPAVAQACAAHGIEAVLTRADHPSGTDRLAEVAAQLGLADDAIVVNVQGDEPLIEPALIDEVALHLAHHADCAIATAAHPLHDSAEVFNPNVVKVVCDAAGRALYFSRAPIPWARDAWSGVPAMPAASARVPLPDMPVLRHIGLYAYRAGFLRRFPTLAAAPLEQTEALEQLRAMWHGERIAVMQTAAAPAPGVDTQADLDRVRTLWAQSMAQEGP</sequence>
<organism>
    <name type="scientific">Cupriavidus taiwanensis (strain DSM 17343 / BCRC 17206 / CCUG 44338 / CIP 107171 / LMG 19424 / R1)</name>
    <name type="common">Ralstonia taiwanensis (strain LMG 19424)</name>
    <dbReference type="NCBI Taxonomy" id="977880"/>
    <lineage>
        <taxon>Bacteria</taxon>
        <taxon>Pseudomonadati</taxon>
        <taxon>Pseudomonadota</taxon>
        <taxon>Betaproteobacteria</taxon>
        <taxon>Burkholderiales</taxon>
        <taxon>Burkholderiaceae</taxon>
        <taxon>Cupriavidus</taxon>
    </lineage>
</organism>
<gene>
    <name evidence="1" type="primary">kdsB</name>
    <name type="ordered locus">RALTA_A0560</name>
</gene>
<comment type="function">
    <text evidence="1">Activates KDO (a required 8-carbon sugar) for incorporation into bacterial lipopolysaccharide in Gram-negative bacteria.</text>
</comment>
<comment type="catalytic activity">
    <reaction evidence="1">
        <text>3-deoxy-alpha-D-manno-oct-2-ulosonate + CTP = CMP-3-deoxy-beta-D-manno-octulosonate + diphosphate</text>
        <dbReference type="Rhea" id="RHEA:23448"/>
        <dbReference type="ChEBI" id="CHEBI:33019"/>
        <dbReference type="ChEBI" id="CHEBI:37563"/>
        <dbReference type="ChEBI" id="CHEBI:85986"/>
        <dbReference type="ChEBI" id="CHEBI:85987"/>
        <dbReference type="EC" id="2.7.7.38"/>
    </reaction>
</comment>
<comment type="pathway">
    <text evidence="1">Nucleotide-sugar biosynthesis; CMP-3-deoxy-D-manno-octulosonate biosynthesis; CMP-3-deoxy-D-manno-octulosonate from 3-deoxy-D-manno-octulosonate and CTP: step 1/1.</text>
</comment>
<comment type="pathway">
    <text evidence="1">Bacterial outer membrane biogenesis; lipopolysaccharide biosynthesis.</text>
</comment>
<comment type="subcellular location">
    <subcellularLocation>
        <location evidence="1">Cytoplasm</location>
    </subcellularLocation>
</comment>
<comment type="similarity">
    <text evidence="1">Belongs to the KdsB family.</text>
</comment>
<proteinExistence type="inferred from homology"/>
<feature type="chain" id="PRO_0000370055" description="3-deoxy-manno-octulosonate cytidylyltransferase">
    <location>
        <begin position="1"/>
        <end position="269"/>
    </location>
</feature>
<name>KDSB_CUPTR</name>
<accession>B3R0X8</accession>
<keyword id="KW-0963">Cytoplasm</keyword>
<keyword id="KW-0448">Lipopolysaccharide biosynthesis</keyword>
<keyword id="KW-0548">Nucleotidyltransferase</keyword>
<keyword id="KW-0808">Transferase</keyword>